<evidence type="ECO:0000255" key="1">
    <source>
        <dbReference type="HAMAP-Rule" id="MF_00059"/>
    </source>
</evidence>
<sequence length="366" mass="39796">MAISDNGGGSVGLCYGSEFSISDHWDKLTRPSSIKVVGDGDLSRSAELIVEPLESGFALTLGNALRRVMMSSLRGFAVYGIEVEGVSHELTSLSGVREDVADLVLNLSMLRVKLLTSESRVLRLVAKGPGEITAAAIGDSEGCVVLNKDLHICTLGKDVDFSMKIYVNSGKGYVPASEYRAASRSGATSEVGPGFIATNALYSPVKKVAFRIESSRIGQFTDYDRLVISVETDGSISPDEAVAVSARVLQDQLQSFIGSEEVEGESRKKVDKEEGALPYDHNLLRKVDELELSVRSHNCLKNDNITYIGDLVQKTESDMLRTPNFGRKSLNEINEVLASMNLHLGMKVPNWPPESIENLSKQYSED</sequence>
<accession>Q5PA81</accession>
<reference key="1">
    <citation type="journal article" date="2005" name="Proc. Natl. Acad. Sci. U.S.A.">
        <title>Complete genome sequencing of Anaplasma marginale reveals that the surface is skewed to two superfamilies of outer membrane proteins.</title>
        <authorList>
            <person name="Brayton K.A."/>
            <person name="Kappmeyer L.S."/>
            <person name="Herndon D.R."/>
            <person name="Dark M.J."/>
            <person name="Tibbals D.L."/>
            <person name="Palmer G.H."/>
            <person name="McGuire T.C."/>
            <person name="Knowles D.P. Jr."/>
        </authorList>
    </citation>
    <scope>NUCLEOTIDE SEQUENCE [LARGE SCALE GENOMIC DNA]</scope>
    <source>
        <strain>St. Maries</strain>
    </source>
</reference>
<dbReference type="EC" id="2.7.7.6" evidence="1"/>
<dbReference type="EMBL" id="CP000030">
    <property type="protein sequence ID" value="AAV86799.1"/>
    <property type="molecule type" value="Genomic_DNA"/>
</dbReference>
<dbReference type="RefSeq" id="WP_010265240.1">
    <property type="nucleotide sequence ID" value="NZ_AFMU01000034.1"/>
</dbReference>
<dbReference type="SMR" id="Q5PA81"/>
<dbReference type="KEGG" id="ama:AM887"/>
<dbReference type="HOGENOM" id="CLU_053084_0_0_5"/>
<dbReference type="GO" id="GO:0005737">
    <property type="term" value="C:cytoplasm"/>
    <property type="evidence" value="ECO:0007669"/>
    <property type="project" value="UniProtKB-ARBA"/>
</dbReference>
<dbReference type="GO" id="GO:0000428">
    <property type="term" value="C:DNA-directed RNA polymerase complex"/>
    <property type="evidence" value="ECO:0007669"/>
    <property type="project" value="UniProtKB-KW"/>
</dbReference>
<dbReference type="GO" id="GO:0003677">
    <property type="term" value="F:DNA binding"/>
    <property type="evidence" value="ECO:0007669"/>
    <property type="project" value="UniProtKB-UniRule"/>
</dbReference>
<dbReference type="GO" id="GO:0003899">
    <property type="term" value="F:DNA-directed RNA polymerase activity"/>
    <property type="evidence" value="ECO:0007669"/>
    <property type="project" value="UniProtKB-UniRule"/>
</dbReference>
<dbReference type="GO" id="GO:0046983">
    <property type="term" value="F:protein dimerization activity"/>
    <property type="evidence" value="ECO:0007669"/>
    <property type="project" value="InterPro"/>
</dbReference>
<dbReference type="GO" id="GO:0006351">
    <property type="term" value="P:DNA-templated transcription"/>
    <property type="evidence" value="ECO:0007669"/>
    <property type="project" value="UniProtKB-UniRule"/>
</dbReference>
<dbReference type="CDD" id="cd06928">
    <property type="entry name" value="RNAP_alpha_NTD"/>
    <property type="match status" value="1"/>
</dbReference>
<dbReference type="FunFam" id="1.10.150.20:FF:000001">
    <property type="entry name" value="DNA-directed RNA polymerase subunit alpha"/>
    <property type="match status" value="1"/>
</dbReference>
<dbReference type="FunFam" id="2.170.120.12:FF:000001">
    <property type="entry name" value="DNA-directed RNA polymerase subunit alpha"/>
    <property type="match status" value="1"/>
</dbReference>
<dbReference type="Gene3D" id="1.10.150.20">
    <property type="entry name" value="5' to 3' exonuclease, C-terminal subdomain"/>
    <property type="match status" value="1"/>
</dbReference>
<dbReference type="Gene3D" id="2.170.120.12">
    <property type="entry name" value="DNA-directed RNA polymerase, insert domain"/>
    <property type="match status" value="1"/>
</dbReference>
<dbReference type="Gene3D" id="3.30.1360.10">
    <property type="entry name" value="RNA polymerase, RBP11-like subunit"/>
    <property type="match status" value="1"/>
</dbReference>
<dbReference type="HAMAP" id="MF_00059">
    <property type="entry name" value="RNApol_bact_RpoA"/>
    <property type="match status" value="1"/>
</dbReference>
<dbReference type="InterPro" id="IPR011262">
    <property type="entry name" value="DNA-dir_RNA_pol_insert"/>
</dbReference>
<dbReference type="InterPro" id="IPR011263">
    <property type="entry name" value="DNA-dir_RNA_pol_RpoA/D/Rpb3"/>
</dbReference>
<dbReference type="InterPro" id="IPR011773">
    <property type="entry name" value="DNA-dir_RpoA"/>
</dbReference>
<dbReference type="InterPro" id="IPR036603">
    <property type="entry name" value="RBP11-like"/>
</dbReference>
<dbReference type="InterPro" id="IPR011260">
    <property type="entry name" value="RNAP_asu_C"/>
</dbReference>
<dbReference type="InterPro" id="IPR036643">
    <property type="entry name" value="RNApol_insert_sf"/>
</dbReference>
<dbReference type="NCBIfam" id="NF003513">
    <property type="entry name" value="PRK05182.1-2"/>
    <property type="match status" value="1"/>
</dbReference>
<dbReference type="NCBIfam" id="NF003519">
    <property type="entry name" value="PRK05182.2-5"/>
    <property type="match status" value="1"/>
</dbReference>
<dbReference type="NCBIfam" id="TIGR02027">
    <property type="entry name" value="rpoA"/>
    <property type="match status" value="1"/>
</dbReference>
<dbReference type="Pfam" id="PF01000">
    <property type="entry name" value="RNA_pol_A_bac"/>
    <property type="match status" value="1"/>
</dbReference>
<dbReference type="Pfam" id="PF03118">
    <property type="entry name" value="RNA_pol_A_CTD"/>
    <property type="match status" value="1"/>
</dbReference>
<dbReference type="Pfam" id="PF01193">
    <property type="entry name" value="RNA_pol_L"/>
    <property type="match status" value="1"/>
</dbReference>
<dbReference type="SMART" id="SM00662">
    <property type="entry name" value="RPOLD"/>
    <property type="match status" value="1"/>
</dbReference>
<dbReference type="SUPFAM" id="SSF47789">
    <property type="entry name" value="C-terminal domain of RNA polymerase alpha subunit"/>
    <property type="match status" value="1"/>
</dbReference>
<dbReference type="SUPFAM" id="SSF56553">
    <property type="entry name" value="Insert subdomain of RNA polymerase alpha subunit"/>
    <property type="match status" value="1"/>
</dbReference>
<dbReference type="SUPFAM" id="SSF55257">
    <property type="entry name" value="RBP11-like subunits of RNA polymerase"/>
    <property type="match status" value="1"/>
</dbReference>
<organism>
    <name type="scientific">Anaplasma marginale (strain St. Maries)</name>
    <dbReference type="NCBI Taxonomy" id="234826"/>
    <lineage>
        <taxon>Bacteria</taxon>
        <taxon>Pseudomonadati</taxon>
        <taxon>Pseudomonadota</taxon>
        <taxon>Alphaproteobacteria</taxon>
        <taxon>Rickettsiales</taxon>
        <taxon>Anaplasmataceae</taxon>
        <taxon>Anaplasma</taxon>
    </lineage>
</organism>
<keyword id="KW-0240">DNA-directed RNA polymerase</keyword>
<keyword id="KW-0548">Nucleotidyltransferase</keyword>
<keyword id="KW-0804">Transcription</keyword>
<keyword id="KW-0808">Transferase</keyword>
<protein>
    <recommendedName>
        <fullName evidence="1">DNA-directed RNA polymerase subunit alpha</fullName>
        <shortName evidence="1">RNAP subunit alpha</shortName>
        <ecNumber evidence="1">2.7.7.6</ecNumber>
    </recommendedName>
    <alternativeName>
        <fullName evidence="1">RNA polymerase subunit alpha</fullName>
    </alternativeName>
    <alternativeName>
        <fullName evidence="1">Transcriptase subunit alpha</fullName>
    </alternativeName>
</protein>
<gene>
    <name evidence="1" type="primary">rpoA</name>
    <name type="ordered locus">AM887</name>
</gene>
<comment type="function">
    <text evidence="1">DNA-dependent RNA polymerase catalyzes the transcription of DNA into RNA using the four ribonucleoside triphosphates as substrates.</text>
</comment>
<comment type="catalytic activity">
    <reaction evidence="1">
        <text>RNA(n) + a ribonucleoside 5'-triphosphate = RNA(n+1) + diphosphate</text>
        <dbReference type="Rhea" id="RHEA:21248"/>
        <dbReference type="Rhea" id="RHEA-COMP:14527"/>
        <dbReference type="Rhea" id="RHEA-COMP:17342"/>
        <dbReference type="ChEBI" id="CHEBI:33019"/>
        <dbReference type="ChEBI" id="CHEBI:61557"/>
        <dbReference type="ChEBI" id="CHEBI:140395"/>
        <dbReference type="EC" id="2.7.7.6"/>
    </reaction>
</comment>
<comment type="subunit">
    <text evidence="1">Homodimer. The RNAP catalytic core consists of 2 alpha, 1 beta, 1 beta' and 1 omega subunit. When a sigma factor is associated with the core the holoenzyme is formed, which can initiate transcription.</text>
</comment>
<comment type="domain">
    <text evidence="1">The N-terminal domain is essential for RNAP assembly and basal transcription, whereas the C-terminal domain is involved in interaction with transcriptional regulators and with upstream promoter elements.</text>
</comment>
<comment type="similarity">
    <text evidence="1">Belongs to the RNA polymerase alpha chain family.</text>
</comment>
<name>RPOA_ANAMM</name>
<feature type="chain" id="PRO_0000225255" description="DNA-directed RNA polymerase subunit alpha">
    <location>
        <begin position="1"/>
        <end position="366"/>
    </location>
</feature>
<feature type="region of interest" description="Alpha N-terminal domain (alpha-NTD)" evidence="1">
    <location>
        <begin position="1"/>
        <end position="260"/>
    </location>
</feature>
<feature type="region of interest" description="Alpha C-terminal domain (alpha-CTD)" evidence="1">
    <location>
        <begin position="274"/>
        <end position="366"/>
    </location>
</feature>
<proteinExistence type="inferred from homology"/>